<keyword id="KW-0028">Amino-acid biosynthesis</keyword>
<keyword id="KW-0057">Aromatic amino acid biosynthesis</keyword>
<keyword id="KW-0456">Lyase</keyword>
<organism>
    <name type="scientific">Helicobacter pylori (strain HPAG1)</name>
    <dbReference type="NCBI Taxonomy" id="357544"/>
    <lineage>
        <taxon>Bacteria</taxon>
        <taxon>Pseudomonadati</taxon>
        <taxon>Campylobacterota</taxon>
        <taxon>Epsilonproteobacteria</taxon>
        <taxon>Campylobacterales</taxon>
        <taxon>Helicobacteraceae</taxon>
        <taxon>Helicobacter</taxon>
    </lineage>
</organism>
<feature type="chain" id="PRO_1000023475" description="3-dehydroquinate dehydratase">
    <location>
        <begin position="1"/>
        <end position="167"/>
    </location>
</feature>
<feature type="active site" description="Proton acceptor" evidence="1">
    <location>
        <position position="22"/>
    </location>
</feature>
<feature type="active site" description="Proton donor" evidence="1">
    <location>
        <position position="102"/>
    </location>
</feature>
<feature type="binding site" evidence="1">
    <location>
        <position position="76"/>
    </location>
    <ligand>
        <name>substrate</name>
    </ligand>
</feature>
<feature type="binding site" evidence="1">
    <location>
        <position position="82"/>
    </location>
    <ligand>
        <name>substrate</name>
    </ligand>
</feature>
<feature type="binding site" evidence="1">
    <location>
        <position position="89"/>
    </location>
    <ligand>
        <name>substrate</name>
    </ligand>
</feature>
<feature type="binding site" evidence="1">
    <location>
        <begin position="103"/>
        <end position="104"/>
    </location>
    <ligand>
        <name>substrate</name>
    </ligand>
</feature>
<feature type="binding site" evidence="1">
    <location>
        <position position="113"/>
    </location>
    <ligand>
        <name>substrate</name>
    </ligand>
</feature>
<feature type="site" description="Transition state stabilizer" evidence="1">
    <location>
        <position position="17"/>
    </location>
</feature>
<sequence>MKILVIQGPNLNMLGHRDPRLYGMVTLDQIHEIMQTFVKQGNLDVELEFFQTNFEGEIIDKIQESVGSDYEGIIINPGAFSHTSIAIADAIMLAGKPVIEVHLTNIQAREEFRKNSYTGAACGGVIMGFGPLGYNMALMAMVNILAEMKAFQEAQKNNPNNPINNQK</sequence>
<reference key="1">
    <citation type="journal article" date="2006" name="Proc. Natl. Acad. Sci. U.S.A.">
        <title>The complete genome sequence of a chronic atrophic gastritis Helicobacter pylori strain: evolution during disease progression.</title>
        <authorList>
            <person name="Oh J.D."/>
            <person name="Kling-Baeckhed H."/>
            <person name="Giannakis M."/>
            <person name="Xu J."/>
            <person name="Fulton R.S."/>
            <person name="Fulton L.A."/>
            <person name="Cordum H.S."/>
            <person name="Wang C."/>
            <person name="Elliott G."/>
            <person name="Edwards J."/>
            <person name="Mardis E.R."/>
            <person name="Engstrand L.G."/>
            <person name="Gordon J.I."/>
        </authorList>
    </citation>
    <scope>NUCLEOTIDE SEQUENCE [LARGE SCALE GENOMIC DNA]</scope>
    <source>
        <strain>HPAG1</strain>
    </source>
</reference>
<proteinExistence type="inferred from homology"/>
<gene>
    <name evidence="1" type="primary">aroQ</name>
    <name type="ordered locus">HPAG1_0409</name>
</gene>
<dbReference type="EC" id="4.2.1.10" evidence="1"/>
<dbReference type="EMBL" id="CP000241">
    <property type="protein sequence ID" value="ABF84476.1"/>
    <property type="molecule type" value="Genomic_DNA"/>
</dbReference>
<dbReference type="RefSeq" id="WP_000699284.1">
    <property type="nucleotide sequence ID" value="NC_008086.1"/>
</dbReference>
<dbReference type="SMR" id="Q1CU96"/>
<dbReference type="KEGG" id="hpa:HPAG1_0409"/>
<dbReference type="HOGENOM" id="CLU_090968_3_0_7"/>
<dbReference type="UniPathway" id="UPA00053">
    <property type="reaction ID" value="UER00086"/>
</dbReference>
<dbReference type="GO" id="GO:0003855">
    <property type="term" value="F:3-dehydroquinate dehydratase activity"/>
    <property type="evidence" value="ECO:0007669"/>
    <property type="project" value="UniProtKB-UniRule"/>
</dbReference>
<dbReference type="GO" id="GO:0008652">
    <property type="term" value="P:amino acid biosynthetic process"/>
    <property type="evidence" value="ECO:0007669"/>
    <property type="project" value="UniProtKB-KW"/>
</dbReference>
<dbReference type="GO" id="GO:0009073">
    <property type="term" value="P:aromatic amino acid family biosynthetic process"/>
    <property type="evidence" value="ECO:0007669"/>
    <property type="project" value="UniProtKB-KW"/>
</dbReference>
<dbReference type="GO" id="GO:0009423">
    <property type="term" value="P:chorismate biosynthetic process"/>
    <property type="evidence" value="ECO:0007669"/>
    <property type="project" value="UniProtKB-UniRule"/>
</dbReference>
<dbReference type="GO" id="GO:0019631">
    <property type="term" value="P:quinate catabolic process"/>
    <property type="evidence" value="ECO:0007669"/>
    <property type="project" value="TreeGrafter"/>
</dbReference>
<dbReference type="CDD" id="cd00466">
    <property type="entry name" value="DHQase_II"/>
    <property type="match status" value="1"/>
</dbReference>
<dbReference type="Gene3D" id="3.40.50.9100">
    <property type="entry name" value="Dehydroquinase, class II"/>
    <property type="match status" value="1"/>
</dbReference>
<dbReference type="HAMAP" id="MF_00169">
    <property type="entry name" value="AroQ"/>
    <property type="match status" value="1"/>
</dbReference>
<dbReference type="InterPro" id="IPR001874">
    <property type="entry name" value="DHquinase_II"/>
</dbReference>
<dbReference type="InterPro" id="IPR018509">
    <property type="entry name" value="DHquinase_II_CS"/>
</dbReference>
<dbReference type="InterPro" id="IPR036441">
    <property type="entry name" value="DHquinase_II_sf"/>
</dbReference>
<dbReference type="NCBIfam" id="TIGR01088">
    <property type="entry name" value="aroQ"/>
    <property type="match status" value="1"/>
</dbReference>
<dbReference type="NCBIfam" id="NF003805">
    <property type="entry name" value="PRK05395.1-2"/>
    <property type="match status" value="1"/>
</dbReference>
<dbReference type="NCBIfam" id="NF003806">
    <property type="entry name" value="PRK05395.1-3"/>
    <property type="match status" value="1"/>
</dbReference>
<dbReference type="NCBIfam" id="NF003807">
    <property type="entry name" value="PRK05395.1-4"/>
    <property type="match status" value="1"/>
</dbReference>
<dbReference type="PANTHER" id="PTHR21272">
    <property type="entry name" value="CATABOLIC 3-DEHYDROQUINASE"/>
    <property type="match status" value="1"/>
</dbReference>
<dbReference type="PANTHER" id="PTHR21272:SF3">
    <property type="entry name" value="CATABOLIC 3-DEHYDROQUINASE"/>
    <property type="match status" value="1"/>
</dbReference>
<dbReference type="Pfam" id="PF01220">
    <property type="entry name" value="DHquinase_II"/>
    <property type="match status" value="1"/>
</dbReference>
<dbReference type="PIRSF" id="PIRSF001399">
    <property type="entry name" value="DHquinase_II"/>
    <property type="match status" value="1"/>
</dbReference>
<dbReference type="SUPFAM" id="SSF52304">
    <property type="entry name" value="Type II 3-dehydroquinate dehydratase"/>
    <property type="match status" value="1"/>
</dbReference>
<dbReference type="PROSITE" id="PS01029">
    <property type="entry name" value="DEHYDROQUINASE_II"/>
    <property type="match status" value="1"/>
</dbReference>
<accession>Q1CU96</accession>
<comment type="function">
    <text evidence="1">Catalyzes a trans-dehydration via an enolate intermediate.</text>
</comment>
<comment type="catalytic activity">
    <reaction evidence="1">
        <text>3-dehydroquinate = 3-dehydroshikimate + H2O</text>
        <dbReference type="Rhea" id="RHEA:21096"/>
        <dbReference type="ChEBI" id="CHEBI:15377"/>
        <dbReference type="ChEBI" id="CHEBI:16630"/>
        <dbReference type="ChEBI" id="CHEBI:32364"/>
        <dbReference type="EC" id="4.2.1.10"/>
    </reaction>
</comment>
<comment type="pathway">
    <text evidence="1">Metabolic intermediate biosynthesis; chorismate biosynthesis; chorismate from D-erythrose 4-phosphate and phosphoenolpyruvate: step 3/7.</text>
</comment>
<comment type="subunit">
    <text evidence="1">Homododecamer.</text>
</comment>
<comment type="similarity">
    <text evidence="1">Belongs to the type-II 3-dehydroquinase family.</text>
</comment>
<evidence type="ECO:0000255" key="1">
    <source>
        <dbReference type="HAMAP-Rule" id="MF_00169"/>
    </source>
</evidence>
<protein>
    <recommendedName>
        <fullName evidence="1">3-dehydroquinate dehydratase</fullName>
        <shortName evidence="1">3-dehydroquinase</shortName>
        <ecNumber evidence="1">4.2.1.10</ecNumber>
    </recommendedName>
    <alternativeName>
        <fullName evidence="1">Type II DHQase</fullName>
    </alternativeName>
</protein>
<name>AROQ_HELPH</name>